<reference evidence="7" key="1">
    <citation type="journal article" date="1998" name="Science">
        <title>Genome sequence of the nematode C. elegans: a platform for investigating biology.</title>
        <authorList>
            <consortium name="The C. elegans sequencing consortium"/>
        </authorList>
    </citation>
    <scope>NUCLEOTIDE SEQUENCE [LARGE SCALE GENOMIC DNA]</scope>
    <source>
        <strain evidence="7">Bristol N2</strain>
    </source>
</reference>
<reference evidence="6" key="2">
    <citation type="journal article" date="2013" name="Development">
        <title>HECT-E3 ligase ETC-1 regulates securin and cyclin B1 cytoplasmic abundance to promote timely anaphase during meiosis in C. elegans.</title>
        <authorList>
            <person name="Wang R."/>
            <person name="Kaul Z."/>
            <person name="Ambardekar C."/>
            <person name="Yamamoto T.G."/>
            <person name="Kavdia K."/>
            <person name="Kodali K."/>
            <person name="High A.A."/>
            <person name="Kitagawa R."/>
        </authorList>
    </citation>
    <scope>FUNCTION</scope>
    <scope>CATALYTIC ACTIVITY</scope>
    <scope>INTERACTION WITH IFY-1 AND CYB-1</scope>
    <scope>PATHWAY</scope>
    <scope>DISRUPTION PHENOTYPE</scope>
</reference>
<organism evidence="7">
    <name type="scientific">Caenorhabditis elegans</name>
    <dbReference type="NCBI Taxonomy" id="6239"/>
    <lineage>
        <taxon>Eukaryota</taxon>
        <taxon>Metazoa</taxon>
        <taxon>Ecdysozoa</taxon>
        <taxon>Nematoda</taxon>
        <taxon>Chromadorea</taxon>
        <taxon>Rhabditida</taxon>
        <taxon>Rhabditina</taxon>
        <taxon>Rhabditomorpha</taxon>
        <taxon>Rhabditoidea</taxon>
        <taxon>Rhabditidae</taxon>
        <taxon>Peloderinae</taxon>
        <taxon>Caenorhabditis</taxon>
    </lineage>
</organism>
<sequence length="1001" mass="116415">MIKSLNERDNFLNRLREMEHKREKDEKQEKAARKVQKFWRGHRVQHNQRLLFRAEFDAVSDRQRGLEETIKMAQLLVNFYETNKDEERLVMTLSELVKLKTSDKEFEKRIRETQRLLLARCCIKFLKNATENTIFFHIFRYLEDYVTCHSKLFEASSKLGLFNAEFHLLEALIGKPTGKTVERASLNPRILQLLTRIFETFVNPSRSTSVSVNVANRLLKTICVNITDLNFSNYILYYIKDHIKPTSPNFTNLFEAMKSVDILNNWKVRPEIAETASLRLQSIFVSQIVHVSNTQSEDVKQYFNSLAVFLEHHSKIMRSLNVKEDLSEFGRLRTSVNNHLKQYCEEMLISNEFRRAACIYANLPGVQVETIISLRKYFSQFLDLLAASNTFVEALYAFIARLCPNGEFDPIDAKSPKVNALELFCNCLNKRVSSVADSDFVPTDIFVDFDHTVEFLRDVSIKLIHLMFPTMARGDLYSGNLKEKMYKAETDWKDVTESVFSILGAIYQKDIRLKYFPEEFWTNHGREVLSGIGEHRRMPRRRMPNGRLQIERTMDTEFVERLAAIYEMDSDSENDDEDEDNNLPAVLRRAICVMKHIPFIVPFMDRVKLFTRLLNQDKEKHYTSTFGMGFNGPSVTVRRDQVYMDAFETFAPKMQGDKVNDLKSMVRVKMVNWAGMNESGIDGGGIFREFLSELLKTAFNVERGFFTFTESKLLYPNPTAPFLLGVDCLAHFQFIGRMIGKLIYERQLQEVRFAEFFIAQIFETDKNKDVDLQHMKSFDPIIFKHLKALQKMNNRELDELQLDFSVVTSDMGLVRNVNLKPNGSKFRVTVENVHEYVRLYVNYHLKQRIASMVDAVRKGISEIISIEWMRMFAPHELQIMIAGYEEVFTAKELRKFCELRFAAGTQDINYEEMFWDVIDKLSNDDKKALLKFVTGCSRAPVDGFKSIQPRMGVLVIPSSDDELPTSATCMNMLRIPKYSNRTKLEEKLRYAINSGAGFELA</sequence>
<comment type="function">
    <text evidence="4">E3 ubiquitin-protein ligase that accepts ubiquitin from E2 ubiquitin-conjugating enzymes, such as ubc-18, in the form of a thioester and then directly transfers the ubiquitin to targeted substrates. Ubiquitinates ify-1 and cyb-1 targeting them for degradation in post-meiotic embryos.</text>
</comment>
<comment type="catalytic activity">
    <reaction evidence="1 4">
        <text>S-ubiquitinyl-[E2 ubiquitin-conjugating enzyme]-L-cysteine + [acceptor protein]-L-lysine = [E2 ubiquitin-conjugating enzyme]-L-cysteine + N(6)-ubiquitinyl-[acceptor protein]-L-lysine.</text>
        <dbReference type="EC" id="2.3.2.26"/>
    </reaction>
</comment>
<comment type="pathway">
    <text evidence="4">Protein modification; protein ubiquitination.</text>
</comment>
<comment type="subunit">
    <text evidence="4">Interacts with ify-1 and cyb-1.</text>
</comment>
<comment type="disruption phenotype">
    <text evidence="4">RNAi-mediated knockdown causes a reduction in progeny viability. ify-1 and cyb-1 accumulate in the cytoplasm during meiosis II. Also extents the length of meiosis II and causes retention of rec-8, a component of the cohesin complex, at sister chromatid cohesion. Causes a delay in oocyte budding.</text>
</comment>
<name>ETC1_CAEEL</name>
<gene>
    <name evidence="5" type="primary">etc-1</name>
    <name evidence="8" type="ORF">D2085.4</name>
</gene>
<keyword id="KW-0175">Coiled coil</keyword>
<keyword id="KW-0469">Meiosis</keyword>
<keyword id="KW-1185">Reference proteome</keyword>
<keyword id="KW-0808">Transferase</keyword>
<keyword id="KW-0833">Ubl conjugation pathway</keyword>
<dbReference type="EC" id="2.3.2.26" evidence="4"/>
<dbReference type="EMBL" id="BX284602">
    <property type="protein sequence ID" value="CAA91061.1"/>
    <property type="molecule type" value="Genomic_DNA"/>
</dbReference>
<dbReference type="PIR" id="T20373">
    <property type="entry name" value="T20373"/>
</dbReference>
<dbReference type="RefSeq" id="NP_495842.1">
    <property type="nucleotide sequence ID" value="NM_063441.5"/>
</dbReference>
<dbReference type="SMR" id="O17736"/>
<dbReference type="FunCoup" id="O17736">
    <property type="interactions" value="1745"/>
</dbReference>
<dbReference type="STRING" id="6239.D2085.4.1"/>
<dbReference type="PaxDb" id="6239-D2085.4"/>
<dbReference type="PeptideAtlas" id="O17736"/>
<dbReference type="EnsemblMetazoa" id="D2085.4.1">
    <property type="protein sequence ID" value="D2085.4.1"/>
    <property type="gene ID" value="WBGene00008429"/>
</dbReference>
<dbReference type="GeneID" id="174388"/>
<dbReference type="KEGG" id="cel:CELE_D2085.4"/>
<dbReference type="UCSC" id="D2085.4">
    <property type="organism name" value="c. elegans"/>
</dbReference>
<dbReference type="AGR" id="WB:WBGene00008429"/>
<dbReference type="CTD" id="174388"/>
<dbReference type="WormBase" id="D2085.4">
    <property type="protein sequence ID" value="CE15744"/>
    <property type="gene ID" value="WBGene00008429"/>
    <property type="gene designation" value="etc-1"/>
</dbReference>
<dbReference type="eggNOG" id="KOG0942">
    <property type="taxonomic scope" value="Eukaryota"/>
</dbReference>
<dbReference type="GeneTree" id="ENSGT00940000156321"/>
<dbReference type="HOGENOM" id="CLU_002173_2_2_1"/>
<dbReference type="InParanoid" id="O17736"/>
<dbReference type="OMA" id="IRVQMVN"/>
<dbReference type="OrthoDB" id="8068875at2759"/>
<dbReference type="PhylomeDB" id="O17736"/>
<dbReference type="Reactome" id="R-CEL-983168">
    <property type="pathway name" value="Antigen processing: Ubiquitination &amp; Proteasome degradation"/>
</dbReference>
<dbReference type="UniPathway" id="UPA00143"/>
<dbReference type="PRO" id="PR:O17736"/>
<dbReference type="Proteomes" id="UP000001940">
    <property type="component" value="Chromosome II"/>
</dbReference>
<dbReference type="Bgee" id="WBGene00008429">
    <property type="expression patterns" value="Expressed in germ line (C elegans) and 4 other cell types or tissues"/>
</dbReference>
<dbReference type="GO" id="GO:0061630">
    <property type="term" value="F:ubiquitin protein ligase activity"/>
    <property type="evidence" value="ECO:0000314"/>
    <property type="project" value="WormBase"/>
</dbReference>
<dbReference type="GO" id="GO:0051321">
    <property type="term" value="P:meiotic cell cycle"/>
    <property type="evidence" value="ECO:0007669"/>
    <property type="project" value="UniProtKB-KW"/>
</dbReference>
<dbReference type="GO" id="GO:1902104">
    <property type="term" value="P:positive regulation of metaphase/anaphase transition of meiotic cell cycle"/>
    <property type="evidence" value="ECO:0000315"/>
    <property type="project" value="WormBase"/>
</dbReference>
<dbReference type="GO" id="GO:0000209">
    <property type="term" value="P:protein polyubiquitination"/>
    <property type="evidence" value="ECO:0000318"/>
    <property type="project" value="GO_Central"/>
</dbReference>
<dbReference type="GO" id="GO:1905189">
    <property type="term" value="P:regulation of metaphase/anaphase transition of meiosis II"/>
    <property type="evidence" value="ECO:0000315"/>
    <property type="project" value="UniProtKB"/>
</dbReference>
<dbReference type="GO" id="GO:0006511">
    <property type="term" value="P:ubiquitin-dependent protein catabolic process"/>
    <property type="evidence" value="ECO:0000314"/>
    <property type="project" value="WormBase"/>
</dbReference>
<dbReference type="CDD" id="cd00078">
    <property type="entry name" value="HECTc"/>
    <property type="match status" value="1"/>
</dbReference>
<dbReference type="FunFam" id="3.30.2160.10:FF:000035">
    <property type="entry name" value="E3 ubiquitin-protein ligase etc-1"/>
    <property type="match status" value="1"/>
</dbReference>
<dbReference type="FunFam" id="3.90.1750.10:FF:000039">
    <property type="entry name" value="Ubiquitin-protein ligase, putative"/>
    <property type="match status" value="1"/>
</dbReference>
<dbReference type="Gene3D" id="3.30.2160.10">
    <property type="entry name" value="Hect, E3 ligase catalytic domain"/>
    <property type="match status" value="1"/>
</dbReference>
<dbReference type="Gene3D" id="3.30.2410.10">
    <property type="entry name" value="Hect, E3 ligase catalytic domain"/>
    <property type="match status" value="1"/>
</dbReference>
<dbReference type="Gene3D" id="3.90.1750.10">
    <property type="entry name" value="Hect, E3 ligase catalytic domains"/>
    <property type="match status" value="1"/>
</dbReference>
<dbReference type="InterPro" id="IPR044611">
    <property type="entry name" value="E3A/B/C-like"/>
</dbReference>
<dbReference type="InterPro" id="IPR000569">
    <property type="entry name" value="HECT_dom"/>
</dbReference>
<dbReference type="InterPro" id="IPR035983">
    <property type="entry name" value="Hect_E3_ubiquitin_ligase"/>
</dbReference>
<dbReference type="PANTHER" id="PTHR45700">
    <property type="entry name" value="UBIQUITIN-PROTEIN LIGASE E3C"/>
    <property type="match status" value="1"/>
</dbReference>
<dbReference type="PANTHER" id="PTHR45700:SF2">
    <property type="entry name" value="UBIQUITIN-PROTEIN LIGASE E3C"/>
    <property type="match status" value="1"/>
</dbReference>
<dbReference type="Pfam" id="PF00632">
    <property type="entry name" value="HECT"/>
    <property type="match status" value="1"/>
</dbReference>
<dbReference type="SMART" id="SM00119">
    <property type="entry name" value="HECTc"/>
    <property type="match status" value="1"/>
</dbReference>
<dbReference type="SUPFAM" id="SSF56204">
    <property type="entry name" value="Hect, E3 ligase catalytic domain"/>
    <property type="match status" value="1"/>
</dbReference>
<dbReference type="PROSITE" id="PS50237">
    <property type="entry name" value="HECT"/>
    <property type="match status" value="1"/>
</dbReference>
<dbReference type="PROSITE" id="PS50096">
    <property type="entry name" value="IQ"/>
    <property type="match status" value="1"/>
</dbReference>
<protein>
    <recommendedName>
        <fullName evidence="6">E3 ubiquitin-protein ligase etc-1</fullName>
        <ecNumber evidence="4">2.3.2.26</ecNumber>
    </recommendedName>
    <alternativeName>
        <fullName evidence="6">HECT-type E3 ubiquitin transferase</fullName>
    </alternativeName>
</protein>
<evidence type="ECO:0000255" key="1"/>
<evidence type="ECO:0000255" key="2">
    <source>
        <dbReference type="PROSITE-ProRule" id="PRU00104"/>
    </source>
</evidence>
<evidence type="ECO:0000255" key="3">
    <source>
        <dbReference type="PROSITE-ProRule" id="PRU00116"/>
    </source>
</evidence>
<evidence type="ECO:0000269" key="4">
    <source>
    </source>
</evidence>
<evidence type="ECO:0000303" key="5">
    <source>
    </source>
</evidence>
<evidence type="ECO:0000305" key="6"/>
<evidence type="ECO:0000312" key="7">
    <source>
        <dbReference type="Proteomes" id="UP000001940"/>
    </source>
</evidence>
<evidence type="ECO:0000312" key="8">
    <source>
        <dbReference type="WormBase" id="D2085.4"/>
    </source>
</evidence>
<proteinExistence type="evidence at protein level"/>
<accession>O17736</accession>
<accession>Q18992</accession>
<feature type="chain" id="PRO_0000440175" description="E3 ubiquitin-protein ligase etc-1" evidence="6">
    <location>
        <begin position="1"/>
        <end position="1001"/>
    </location>
</feature>
<feature type="domain" description="IQ" evidence="3">
    <location>
        <begin position="28"/>
        <end position="57"/>
    </location>
</feature>
<feature type="domain" description="HECT" evidence="2">
    <location>
        <begin position="658"/>
        <end position="1001"/>
    </location>
</feature>
<feature type="coiled-coil region" evidence="1">
    <location>
        <begin position="66"/>
        <end position="115"/>
    </location>
</feature>
<feature type="active site" description="Glycyl thioester intermediate" evidence="2">
    <location>
        <position position="969"/>
    </location>
</feature>